<evidence type="ECO:0000255" key="1">
    <source>
        <dbReference type="HAMAP-Rule" id="MF_00693"/>
    </source>
</evidence>
<evidence type="ECO:0000256" key="2">
    <source>
        <dbReference type="SAM" id="MobiDB-lite"/>
    </source>
</evidence>
<sequence>MAGHSKFKNIMHRKGAQDKKRSAMFSKLSREITVAAKMGMPDPDMNPRLRAAINAAKAQSMPKDNIARAIDKASKGEGDNYEEVRYEGYGPGGVAIIVEALTDNRNRTATNVRTAFAKNGGNLGASGAVSHGFERLGLIEYPGKVGDEEKVLEAAIEAGAEDVESDMGDGDENPGSHQIWVAVESLHEVARELEKTLGEAEGVKLAWKPSMKTSVDADNAATLLKLIDVLEDDDDVQTVWGNYDIPDDVMETLG</sequence>
<comment type="subcellular location">
    <subcellularLocation>
        <location evidence="1">Cytoplasm</location>
    </subcellularLocation>
</comment>
<comment type="similarity">
    <text evidence="1">Belongs to the TACO1 family.</text>
</comment>
<keyword id="KW-0963">Cytoplasm</keyword>
<keyword id="KW-0238">DNA-binding</keyword>
<keyword id="KW-1185">Reference proteome</keyword>
<keyword id="KW-0804">Transcription</keyword>
<keyword id="KW-0805">Transcription regulation</keyword>
<proteinExistence type="inferred from homology"/>
<organism>
    <name type="scientific">Novosphingobium aromaticivorans (strain ATCC 700278 / DSM 12444 / CCUG 56034 / CIP 105152 / NBRC 16084 / F199)</name>
    <dbReference type="NCBI Taxonomy" id="279238"/>
    <lineage>
        <taxon>Bacteria</taxon>
        <taxon>Pseudomonadati</taxon>
        <taxon>Pseudomonadota</taxon>
        <taxon>Alphaproteobacteria</taxon>
        <taxon>Sphingomonadales</taxon>
        <taxon>Sphingomonadaceae</taxon>
        <taxon>Novosphingobium</taxon>
    </lineage>
</organism>
<reference key="1">
    <citation type="submission" date="2006-01" db="EMBL/GenBank/DDBJ databases">
        <title>Complete sequence of Novosphingobium aromaticivorans DSM 12444.</title>
        <authorList>
            <consortium name="US DOE Joint Genome Institute"/>
            <person name="Copeland A."/>
            <person name="Lucas S."/>
            <person name="Lapidus A."/>
            <person name="Barry K."/>
            <person name="Detter J.C."/>
            <person name="Glavina T."/>
            <person name="Hammon N."/>
            <person name="Israni S."/>
            <person name="Pitluck S."/>
            <person name="Chain P."/>
            <person name="Malfatti S."/>
            <person name="Shin M."/>
            <person name="Vergez L."/>
            <person name="Schmutz J."/>
            <person name="Larimer F."/>
            <person name="Land M."/>
            <person name="Kyrpides N."/>
            <person name="Ivanova N."/>
            <person name="Fredrickson J."/>
            <person name="Balkwill D."/>
            <person name="Romine M.F."/>
            <person name="Richardson P."/>
        </authorList>
    </citation>
    <scope>NUCLEOTIDE SEQUENCE [LARGE SCALE GENOMIC DNA]</scope>
    <source>
        <strain>ATCC 700278 / DSM 12444 / CCUG 56034 / CIP 105152 / NBRC 16084 / F199</strain>
    </source>
</reference>
<protein>
    <recommendedName>
        <fullName evidence="1">Probable transcriptional regulatory protein Saro_0419</fullName>
    </recommendedName>
</protein>
<accession>Q2GBA6</accession>
<dbReference type="EMBL" id="CP000248">
    <property type="protein sequence ID" value="ABD24867.1"/>
    <property type="molecule type" value="Genomic_DNA"/>
</dbReference>
<dbReference type="RefSeq" id="WP_011444081.1">
    <property type="nucleotide sequence ID" value="NC_007794.1"/>
</dbReference>
<dbReference type="SMR" id="Q2GBA6"/>
<dbReference type="STRING" id="279238.Saro_0419"/>
<dbReference type="KEGG" id="nar:Saro_0419"/>
<dbReference type="eggNOG" id="COG0217">
    <property type="taxonomic scope" value="Bacteria"/>
</dbReference>
<dbReference type="HOGENOM" id="CLU_062974_2_2_5"/>
<dbReference type="Proteomes" id="UP000009134">
    <property type="component" value="Chromosome"/>
</dbReference>
<dbReference type="GO" id="GO:0005829">
    <property type="term" value="C:cytosol"/>
    <property type="evidence" value="ECO:0007669"/>
    <property type="project" value="TreeGrafter"/>
</dbReference>
<dbReference type="GO" id="GO:0003677">
    <property type="term" value="F:DNA binding"/>
    <property type="evidence" value="ECO:0007669"/>
    <property type="project" value="UniProtKB-UniRule"/>
</dbReference>
<dbReference type="GO" id="GO:0006355">
    <property type="term" value="P:regulation of DNA-templated transcription"/>
    <property type="evidence" value="ECO:0007669"/>
    <property type="project" value="UniProtKB-UniRule"/>
</dbReference>
<dbReference type="FunFam" id="1.10.10.200:FF:000002">
    <property type="entry name" value="Probable transcriptional regulatory protein CLM62_37755"/>
    <property type="match status" value="1"/>
</dbReference>
<dbReference type="Gene3D" id="1.10.10.200">
    <property type="match status" value="1"/>
</dbReference>
<dbReference type="Gene3D" id="3.30.70.980">
    <property type="match status" value="2"/>
</dbReference>
<dbReference type="HAMAP" id="MF_00693">
    <property type="entry name" value="Transcrip_reg_TACO1"/>
    <property type="match status" value="1"/>
</dbReference>
<dbReference type="InterPro" id="IPR017856">
    <property type="entry name" value="Integrase-like_N"/>
</dbReference>
<dbReference type="InterPro" id="IPR048300">
    <property type="entry name" value="TACO1_YebC-like_2nd/3rd_dom"/>
</dbReference>
<dbReference type="InterPro" id="IPR049083">
    <property type="entry name" value="TACO1_YebC_N"/>
</dbReference>
<dbReference type="InterPro" id="IPR002876">
    <property type="entry name" value="Transcrip_reg_TACO1-like"/>
</dbReference>
<dbReference type="InterPro" id="IPR026564">
    <property type="entry name" value="Transcrip_reg_TACO1-like_dom3"/>
</dbReference>
<dbReference type="InterPro" id="IPR029072">
    <property type="entry name" value="YebC-like"/>
</dbReference>
<dbReference type="NCBIfam" id="NF001030">
    <property type="entry name" value="PRK00110.1"/>
    <property type="match status" value="1"/>
</dbReference>
<dbReference type="NCBIfam" id="NF009044">
    <property type="entry name" value="PRK12378.1"/>
    <property type="match status" value="1"/>
</dbReference>
<dbReference type="NCBIfam" id="TIGR01033">
    <property type="entry name" value="YebC/PmpR family DNA-binding transcriptional regulator"/>
    <property type="match status" value="1"/>
</dbReference>
<dbReference type="PANTHER" id="PTHR12532:SF6">
    <property type="entry name" value="TRANSCRIPTIONAL REGULATORY PROTEIN YEBC-RELATED"/>
    <property type="match status" value="1"/>
</dbReference>
<dbReference type="PANTHER" id="PTHR12532">
    <property type="entry name" value="TRANSLATIONAL ACTIVATOR OF CYTOCHROME C OXIDASE 1"/>
    <property type="match status" value="1"/>
</dbReference>
<dbReference type="Pfam" id="PF20772">
    <property type="entry name" value="TACO1_YebC_N"/>
    <property type="match status" value="1"/>
</dbReference>
<dbReference type="Pfam" id="PF01709">
    <property type="entry name" value="Transcrip_reg"/>
    <property type="match status" value="1"/>
</dbReference>
<dbReference type="SUPFAM" id="SSF75625">
    <property type="entry name" value="YebC-like"/>
    <property type="match status" value="1"/>
</dbReference>
<feature type="chain" id="PRO_0000257092" description="Probable transcriptional regulatory protein Saro_0419">
    <location>
        <begin position="1"/>
        <end position="254"/>
    </location>
</feature>
<feature type="region of interest" description="Disordered" evidence="2">
    <location>
        <begin position="1"/>
        <end position="22"/>
    </location>
</feature>
<feature type="compositionally biased region" description="Basic residues" evidence="2">
    <location>
        <begin position="1"/>
        <end position="14"/>
    </location>
</feature>
<name>Y419_NOVAD</name>
<gene>
    <name type="ordered locus">Saro_0419</name>
</gene>